<reference key="1">
    <citation type="submission" date="2008-04" db="EMBL/GenBank/DDBJ databases">
        <title>Complete sequence of Clostridium botulinum strain Eklund.</title>
        <authorList>
            <person name="Brinkac L.M."/>
            <person name="Brown J.L."/>
            <person name="Bruce D."/>
            <person name="Detter C."/>
            <person name="Munk C."/>
            <person name="Smith L.A."/>
            <person name="Smith T.J."/>
            <person name="Sutton G."/>
            <person name="Brettin T.S."/>
        </authorList>
    </citation>
    <scope>NUCLEOTIDE SEQUENCE [LARGE SCALE GENOMIC DNA]</scope>
    <source>
        <strain>Eklund 17B / Type B</strain>
    </source>
</reference>
<name>PYRE_CLOBB</name>
<protein>
    <recommendedName>
        <fullName evidence="1">Orotate phosphoribosyltransferase</fullName>
        <shortName evidence="1">OPRT</shortName>
        <shortName evidence="1">OPRTase</shortName>
        <ecNumber evidence="1">2.4.2.10</ecNumber>
    </recommendedName>
</protein>
<proteinExistence type="inferred from homology"/>
<keyword id="KW-0328">Glycosyltransferase</keyword>
<keyword id="KW-0460">Magnesium</keyword>
<keyword id="KW-0665">Pyrimidine biosynthesis</keyword>
<keyword id="KW-0808">Transferase</keyword>
<dbReference type="EC" id="2.4.2.10" evidence="1"/>
<dbReference type="EMBL" id="CP001056">
    <property type="protein sequence ID" value="ACD23738.1"/>
    <property type="molecule type" value="Genomic_DNA"/>
</dbReference>
<dbReference type="SMR" id="B2TNF7"/>
<dbReference type="KEGG" id="cbk:CLL_A2575"/>
<dbReference type="PATRIC" id="fig|935198.13.peg.2530"/>
<dbReference type="HOGENOM" id="CLU_074878_0_1_9"/>
<dbReference type="UniPathway" id="UPA00070">
    <property type="reaction ID" value="UER00119"/>
</dbReference>
<dbReference type="Proteomes" id="UP000001195">
    <property type="component" value="Chromosome"/>
</dbReference>
<dbReference type="GO" id="GO:0005737">
    <property type="term" value="C:cytoplasm"/>
    <property type="evidence" value="ECO:0007669"/>
    <property type="project" value="TreeGrafter"/>
</dbReference>
<dbReference type="GO" id="GO:0000287">
    <property type="term" value="F:magnesium ion binding"/>
    <property type="evidence" value="ECO:0007669"/>
    <property type="project" value="UniProtKB-UniRule"/>
</dbReference>
<dbReference type="GO" id="GO:0004588">
    <property type="term" value="F:orotate phosphoribosyltransferase activity"/>
    <property type="evidence" value="ECO:0007669"/>
    <property type="project" value="UniProtKB-UniRule"/>
</dbReference>
<dbReference type="GO" id="GO:0006207">
    <property type="term" value="P:'de novo' pyrimidine nucleobase biosynthetic process"/>
    <property type="evidence" value="ECO:0007669"/>
    <property type="project" value="TreeGrafter"/>
</dbReference>
<dbReference type="GO" id="GO:0044205">
    <property type="term" value="P:'de novo' UMP biosynthetic process"/>
    <property type="evidence" value="ECO:0007669"/>
    <property type="project" value="UniProtKB-UniRule"/>
</dbReference>
<dbReference type="GO" id="GO:0046132">
    <property type="term" value="P:pyrimidine ribonucleoside biosynthetic process"/>
    <property type="evidence" value="ECO:0007669"/>
    <property type="project" value="TreeGrafter"/>
</dbReference>
<dbReference type="CDD" id="cd06223">
    <property type="entry name" value="PRTases_typeI"/>
    <property type="match status" value="1"/>
</dbReference>
<dbReference type="Gene3D" id="3.40.50.2020">
    <property type="match status" value="1"/>
</dbReference>
<dbReference type="HAMAP" id="MF_01208">
    <property type="entry name" value="PyrE"/>
    <property type="match status" value="1"/>
</dbReference>
<dbReference type="InterPro" id="IPR023031">
    <property type="entry name" value="OPRT"/>
</dbReference>
<dbReference type="InterPro" id="IPR004467">
    <property type="entry name" value="Or_phspho_trans_dom"/>
</dbReference>
<dbReference type="InterPro" id="IPR000836">
    <property type="entry name" value="PRibTrfase_dom"/>
</dbReference>
<dbReference type="InterPro" id="IPR029057">
    <property type="entry name" value="PRTase-like"/>
</dbReference>
<dbReference type="NCBIfam" id="TIGR00336">
    <property type="entry name" value="pyrE"/>
    <property type="match status" value="1"/>
</dbReference>
<dbReference type="PANTHER" id="PTHR46683">
    <property type="entry name" value="OROTATE PHOSPHORIBOSYLTRANSFERASE 1-RELATED"/>
    <property type="match status" value="1"/>
</dbReference>
<dbReference type="PANTHER" id="PTHR46683:SF1">
    <property type="entry name" value="OROTATE PHOSPHORIBOSYLTRANSFERASE 1-RELATED"/>
    <property type="match status" value="1"/>
</dbReference>
<dbReference type="Pfam" id="PF00156">
    <property type="entry name" value="Pribosyltran"/>
    <property type="match status" value="1"/>
</dbReference>
<dbReference type="SUPFAM" id="SSF53271">
    <property type="entry name" value="PRTase-like"/>
    <property type="match status" value="1"/>
</dbReference>
<comment type="function">
    <text evidence="1">Catalyzes the transfer of a ribosyl phosphate group from 5-phosphoribose 1-diphosphate to orotate, leading to the formation of orotidine monophosphate (OMP).</text>
</comment>
<comment type="catalytic activity">
    <reaction evidence="1">
        <text>orotidine 5'-phosphate + diphosphate = orotate + 5-phospho-alpha-D-ribose 1-diphosphate</text>
        <dbReference type="Rhea" id="RHEA:10380"/>
        <dbReference type="ChEBI" id="CHEBI:30839"/>
        <dbReference type="ChEBI" id="CHEBI:33019"/>
        <dbReference type="ChEBI" id="CHEBI:57538"/>
        <dbReference type="ChEBI" id="CHEBI:58017"/>
        <dbReference type="EC" id="2.4.2.10"/>
    </reaction>
</comment>
<comment type="cofactor">
    <cofactor evidence="1">
        <name>Mg(2+)</name>
        <dbReference type="ChEBI" id="CHEBI:18420"/>
    </cofactor>
</comment>
<comment type="pathway">
    <text evidence="1">Pyrimidine metabolism; UMP biosynthesis via de novo pathway; UMP from orotate: step 1/2.</text>
</comment>
<comment type="subunit">
    <text evidence="1">Homodimer.</text>
</comment>
<comment type="similarity">
    <text evidence="1">Belongs to the purine/pyrimidine phosphoribosyltransferase family. PyrE subfamily.</text>
</comment>
<organism>
    <name type="scientific">Clostridium botulinum (strain Eklund 17B / Type B)</name>
    <dbReference type="NCBI Taxonomy" id="935198"/>
    <lineage>
        <taxon>Bacteria</taxon>
        <taxon>Bacillati</taxon>
        <taxon>Bacillota</taxon>
        <taxon>Clostridia</taxon>
        <taxon>Eubacteriales</taxon>
        <taxon>Clostridiaceae</taxon>
        <taxon>Clostridium</taxon>
    </lineage>
</organism>
<evidence type="ECO:0000255" key="1">
    <source>
        <dbReference type="HAMAP-Rule" id="MF_01208"/>
    </source>
</evidence>
<accession>B2TNF7</accession>
<gene>
    <name evidence="1" type="primary">pyrE</name>
    <name type="ordered locus">CLL_A2575</name>
</gene>
<sequence>MEAYKKEFIEFMIECGVLTFGDFVTKSGRNTPFFVNTGNYKTGSQLKRLGEYYAEAIKANYKDDYNIVFGPAYKGIPLSVTVTMALSDKYGIDVSYCSNRKEIKDHGDTGILLGSKLNDGDKVLIVEDVTTSGKSIYETMPIIKEQGNVDVVGLVISVNRMEKGQGEKSALVELEEKYGFKSCAIVTMTEVVKYLYNKEVNGKVIINDEVKTRIDEYYKEYGAK</sequence>
<feature type="chain" id="PRO_1000138777" description="Orotate phosphoribosyltransferase">
    <location>
        <begin position="1"/>
        <end position="224"/>
    </location>
</feature>
<feature type="binding site" description="in other chain" evidence="1">
    <location>
        <position position="26"/>
    </location>
    <ligand>
        <name>5-phospho-alpha-D-ribose 1-diphosphate</name>
        <dbReference type="ChEBI" id="CHEBI:58017"/>
        <note>ligand shared between dimeric partners</note>
    </ligand>
</feature>
<feature type="binding site" description="in other chain" evidence="1">
    <location>
        <begin position="73"/>
        <end position="74"/>
    </location>
    <ligand>
        <name>5-phospho-alpha-D-ribose 1-diphosphate</name>
        <dbReference type="ChEBI" id="CHEBI:58017"/>
        <note>ligand shared between dimeric partners</note>
    </ligand>
</feature>
<feature type="binding site" evidence="1">
    <location>
        <position position="100"/>
    </location>
    <ligand>
        <name>5-phospho-alpha-D-ribose 1-diphosphate</name>
        <dbReference type="ChEBI" id="CHEBI:58017"/>
        <note>ligand shared between dimeric partners</note>
    </ligand>
</feature>
<feature type="binding site" description="in other chain" evidence="1">
    <location>
        <position position="101"/>
    </location>
    <ligand>
        <name>5-phospho-alpha-D-ribose 1-diphosphate</name>
        <dbReference type="ChEBI" id="CHEBI:58017"/>
        <note>ligand shared between dimeric partners</note>
    </ligand>
</feature>
<feature type="binding site" evidence="1">
    <location>
        <position position="104"/>
    </location>
    <ligand>
        <name>5-phospho-alpha-D-ribose 1-diphosphate</name>
        <dbReference type="ChEBI" id="CHEBI:58017"/>
        <note>ligand shared between dimeric partners</note>
    </ligand>
</feature>
<feature type="binding site" evidence="1">
    <location>
        <position position="106"/>
    </location>
    <ligand>
        <name>5-phospho-alpha-D-ribose 1-diphosphate</name>
        <dbReference type="ChEBI" id="CHEBI:58017"/>
        <note>ligand shared between dimeric partners</note>
    </ligand>
</feature>
<feature type="binding site" description="in other chain" evidence="1">
    <location>
        <begin position="127"/>
        <end position="135"/>
    </location>
    <ligand>
        <name>5-phospho-alpha-D-ribose 1-diphosphate</name>
        <dbReference type="ChEBI" id="CHEBI:58017"/>
        <note>ligand shared between dimeric partners</note>
    </ligand>
</feature>
<feature type="binding site" evidence="1">
    <location>
        <position position="131"/>
    </location>
    <ligand>
        <name>orotate</name>
        <dbReference type="ChEBI" id="CHEBI:30839"/>
    </ligand>
</feature>
<feature type="binding site" evidence="1">
    <location>
        <position position="160"/>
    </location>
    <ligand>
        <name>orotate</name>
        <dbReference type="ChEBI" id="CHEBI:30839"/>
    </ligand>
</feature>